<sequence>IIGGYECKPHSQPWQAFLVDNK</sequence>
<protein>
    <recommendedName>
        <fullName>Myofibril-bound serine protease</fullName>
        <shortName>MBSP</shortName>
        <ecNumber>3.4.21.-</ecNumber>
    </recommendedName>
</protein>
<name>MBSP_CYPCA</name>
<dbReference type="EC" id="3.4.21.-"/>
<dbReference type="Proteomes" id="UP000694384">
    <property type="component" value="Unplaced"/>
</dbReference>
<dbReference type="Proteomes" id="UP000694427">
    <property type="component" value="Unplaced"/>
</dbReference>
<dbReference type="Proteomes" id="UP000694700">
    <property type="component" value="Unplaced"/>
</dbReference>
<dbReference type="Proteomes" id="UP000694701">
    <property type="component" value="Unplaced"/>
</dbReference>
<dbReference type="Proteomes" id="UP001155660">
    <property type="component" value="Unplaced"/>
</dbReference>
<dbReference type="GO" id="GO:0005737">
    <property type="term" value="C:cytoplasm"/>
    <property type="evidence" value="ECO:0007669"/>
    <property type="project" value="UniProtKB-SubCell"/>
</dbReference>
<dbReference type="GO" id="GO:0008236">
    <property type="term" value="F:serine-type peptidase activity"/>
    <property type="evidence" value="ECO:0007669"/>
    <property type="project" value="UniProtKB-KW"/>
</dbReference>
<dbReference type="GO" id="GO:0006508">
    <property type="term" value="P:proteolysis"/>
    <property type="evidence" value="ECO:0007669"/>
    <property type="project" value="UniProtKB-KW"/>
</dbReference>
<organism>
    <name type="scientific">Cyprinus carpio</name>
    <name type="common">Common carp</name>
    <dbReference type="NCBI Taxonomy" id="7962"/>
    <lineage>
        <taxon>Eukaryota</taxon>
        <taxon>Metazoa</taxon>
        <taxon>Chordata</taxon>
        <taxon>Craniata</taxon>
        <taxon>Vertebrata</taxon>
        <taxon>Euteleostomi</taxon>
        <taxon>Actinopterygii</taxon>
        <taxon>Neopterygii</taxon>
        <taxon>Teleostei</taxon>
        <taxon>Ostariophysi</taxon>
        <taxon>Cypriniformes</taxon>
        <taxon>Cyprinidae</taxon>
        <taxon>Cyprininae</taxon>
        <taxon>Cyprinus</taxon>
    </lineage>
</organism>
<keyword id="KW-0963">Cytoplasm</keyword>
<keyword id="KW-0903">Direct protein sequencing</keyword>
<keyword id="KW-0378">Hydrolase</keyword>
<keyword id="KW-0645">Protease</keyword>
<keyword id="KW-1185">Reference proteome</keyword>
<keyword id="KW-0720">Serine protease</keyword>
<accession>P84477</accession>
<proteinExistence type="evidence at protein level"/>
<reference evidence="4" key="1">
    <citation type="journal article" date="1997" name="Comp. Biochem. Physiol.">
        <title>Purification and characterization of myofibril-bound serine proteinase from carp Cyprinus carpio ordinary muscle.</title>
        <authorList>
            <person name="Osatomi K."/>
            <person name="Sasai H."/>
            <person name="Cao M."/>
            <person name="Hara K."/>
            <person name="Ishihara T."/>
        </authorList>
    </citation>
    <scope>PROTEIN SEQUENCE</scope>
    <scope>FUNCTION</scope>
    <scope>CATALYTIC ACTIVITY</scope>
    <scope>ACTIVITY REGULATION</scope>
    <scope>BIOPHYSICOCHEMICAL PROPERTIES</scope>
    <scope>SUBCELLULAR LOCATION</scope>
    <scope>TISSUE SPECIFICITY</scope>
    <source>
        <tissue evidence="2">Muscle</tissue>
    </source>
</reference>
<comment type="function">
    <text evidence="2">Serine protease that selectively cleaves Arg-|-Xaa bonds.</text>
</comment>
<comment type="activity regulation">
    <text evidence="2">Inhibited by the serine protease inhibitors, antipain, aprotinin, DFP, leupeptin, STI and TLCK, and by the cysteine proteinase inhibitors DTNB and to a lesser extent E-64. Not inhibited by the metalloproteinase inhibitor EDTA.</text>
</comment>
<comment type="biophysicochemical properties">
    <phDependence>
        <text evidence="2">Optimum pH is 8.0. Active from pH 5.0 to at least 9.0.</text>
    </phDependence>
    <temperatureDependence>
        <text evidence="2">Optimum temperature is 55 degrees Celsius.</text>
    </temperatureDependence>
</comment>
<comment type="subcellular location">
    <subcellularLocation>
        <location evidence="2">Cytoplasm</location>
    </subcellularLocation>
</comment>
<comment type="tissue specificity">
    <text evidence="2">Detected in muscle (at protein level).</text>
</comment>
<comment type="similarity">
    <text evidence="1">Belongs to the peptidase S1 family.</text>
</comment>
<feature type="chain" id="PRO_0000088720" description="Myofibril-bound serine protease">
    <location>
        <begin position="1"/>
        <end position="22" status="greater than"/>
    </location>
</feature>
<feature type="non-terminal residue" evidence="3">
    <location>
        <position position="22"/>
    </location>
</feature>
<evidence type="ECO:0000255" key="1">
    <source>
        <dbReference type="PROSITE-ProRule" id="PRU00274"/>
    </source>
</evidence>
<evidence type="ECO:0000269" key="2">
    <source>
    </source>
</evidence>
<evidence type="ECO:0000303" key="3">
    <source>
    </source>
</evidence>
<evidence type="ECO:0000305" key="4"/>